<dbReference type="EMBL" id="L35336">
    <property type="protein sequence ID" value="AAA74600.1"/>
    <property type="molecule type" value="Genomic_DNA"/>
</dbReference>
<dbReference type="GO" id="GO:0000786">
    <property type="term" value="C:nucleosome"/>
    <property type="evidence" value="ECO:0007669"/>
    <property type="project" value="UniProtKB-KW"/>
</dbReference>
<dbReference type="GO" id="GO:0005634">
    <property type="term" value="C:nucleus"/>
    <property type="evidence" value="ECO:0007669"/>
    <property type="project" value="UniProtKB-SubCell"/>
</dbReference>
<dbReference type="GO" id="GO:0003677">
    <property type="term" value="F:DNA binding"/>
    <property type="evidence" value="ECO:0007669"/>
    <property type="project" value="UniProtKB-KW"/>
</dbReference>
<dbReference type="GO" id="GO:0030261">
    <property type="term" value="P:chromosome condensation"/>
    <property type="evidence" value="ECO:0007669"/>
    <property type="project" value="UniProtKB-KW"/>
</dbReference>
<dbReference type="GO" id="GO:0035092">
    <property type="term" value="P:sperm DNA condensation"/>
    <property type="evidence" value="ECO:0007669"/>
    <property type="project" value="InterPro"/>
</dbReference>
<dbReference type="InterPro" id="IPR000221">
    <property type="entry name" value="Protamine_P1"/>
</dbReference>
<dbReference type="PROSITE" id="PS00048">
    <property type="entry name" value="PROTAMINE_P1"/>
    <property type="match status" value="1"/>
</dbReference>
<accession>P67848</accession>
<accession>P42140</accession>
<accession>P42150</accession>
<accession>P42154</accession>
<feature type="chain" id="PRO_0000191500" description="Sperm protamine P1">
    <location>
        <begin position="1"/>
        <end position="63"/>
    </location>
</feature>
<feature type="region of interest" description="Disordered" evidence="1">
    <location>
        <begin position="1"/>
        <end position="63"/>
    </location>
</feature>
<name>HSP1_MURLO</name>
<keyword id="KW-0158">Chromosome</keyword>
<keyword id="KW-0217">Developmental protein</keyword>
<keyword id="KW-0221">Differentiation</keyword>
<keyword id="KW-0226">DNA condensation</keyword>
<keyword id="KW-0238">DNA-binding</keyword>
<keyword id="KW-0544">Nucleosome core</keyword>
<keyword id="KW-0539">Nucleus</keyword>
<keyword id="KW-0744">Spermatogenesis</keyword>
<organism>
    <name type="scientific">Murexia longicaudata</name>
    <name type="common">Short-furred dasyure</name>
    <dbReference type="NCBI Taxonomy" id="37736"/>
    <lineage>
        <taxon>Eukaryota</taxon>
        <taxon>Metazoa</taxon>
        <taxon>Chordata</taxon>
        <taxon>Craniata</taxon>
        <taxon>Vertebrata</taxon>
        <taxon>Euteleostomi</taxon>
        <taxon>Mammalia</taxon>
        <taxon>Metatheria</taxon>
        <taxon>Dasyuromorphia</taxon>
        <taxon>Dasyuridae</taxon>
        <taxon>Murexia</taxon>
    </lineage>
</organism>
<sequence length="63" mass="8697">MARYRRHSRSRSRSRYRRRRRRRSRHHNRRRTYRRSRRHSRRRRGRRRGYSRRRYSRRGRRRY</sequence>
<protein>
    <recommendedName>
        <fullName>Sperm protamine P1</fullName>
    </recommendedName>
</protein>
<reference key="1">
    <citation type="journal article" date="1995" name="Proc. R. Soc. B">
        <title>Molecular phylogeny and evolution of marsupial protamine P1 genes.</title>
        <authorList>
            <person name="Retief J.D."/>
            <person name="Krajewski C."/>
            <person name="Westerman M."/>
            <person name="Winkfein R.J."/>
            <person name="Dixon G.H."/>
        </authorList>
    </citation>
    <scope>NUCLEOTIDE SEQUENCE [GENOMIC DNA]</scope>
    <source>
        <tissue>Sperm</tissue>
    </source>
</reference>
<proteinExistence type="evidence at transcript level"/>
<comment type="function">
    <text>Protamines substitute for histones in the chromatin of sperm during the haploid phase of spermatogenesis. They compact sperm DNA into a highly condensed, stable and inactive complex.</text>
</comment>
<comment type="subcellular location">
    <subcellularLocation>
        <location>Nucleus</location>
    </subcellularLocation>
    <subcellularLocation>
        <location>Chromosome</location>
    </subcellularLocation>
</comment>
<comment type="tissue specificity">
    <text>Testis.</text>
</comment>
<comment type="similarity">
    <text evidence="2">Belongs to the protamine P1 family.</text>
</comment>
<gene>
    <name type="primary">PRM1</name>
</gene>
<evidence type="ECO:0000256" key="1">
    <source>
        <dbReference type="SAM" id="MobiDB-lite"/>
    </source>
</evidence>
<evidence type="ECO:0000305" key="2"/>